<keyword id="KW-0020">Allergen</keyword>
<keyword id="KW-0175">Coiled coil</keyword>
<keyword id="KW-0514">Muscle protein</keyword>
<keyword id="KW-1185">Reference proteome</keyword>
<keyword id="KW-0677">Repeat</keyword>
<comment type="function">
    <text evidence="2">Tropomyosin, in association with the troponin complex, plays a central role in the calcium dependent regulation of muscle contraction.</text>
</comment>
<comment type="subunit">
    <text evidence="1">Homodimer.</text>
</comment>
<comment type="domain">
    <text evidence="8">The molecule is in a coiled coil structure that is formed by 2 polypeptide chains. The sequence exhibits a prominent seven-residues periodicity.</text>
</comment>
<comment type="allergen">
    <text evidence="6">Causes an allergic reaction in human. Binds to IgE in 80% of the 15 patients tested allergic to oysters.</text>
</comment>
<comment type="similarity">
    <text evidence="4 8">Belongs to the tropomyosin family.</text>
</comment>
<accession>Q95WY0</accession>
<organism evidence="9">
    <name type="scientific">Magallana gigas</name>
    <name type="common">Pacific oyster</name>
    <name type="synonym">Crassostrea gigas</name>
    <dbReference type="NCBI Taxonomy" id="29159"/>
    <lineage>
        <taxon>Eukaryota</taxon>
        <taxon>Metazoa</taxon>
        <taxon>Spiralia</taxon>
        <taxon>Lophotrochozoa</taxon>
        <taxon>Mollusca</taxon>
        <taxon>Bivalvia</taxon>
        <taxon>Autobranchia</taxon>
        <taxon>Pteriomorphia</taxon>
        <taxon>Ostreida</taxon>
        <taxon>Ostreoidea</taxon>
        <taxon>Ostreidae</taxon>
        <taxon>Magallana</taxon>
    </lineage>
</organism>
<feature type="chain" id="PRO_0000447282" description="Tropomyosin">
    <location>
        <begin position="1" status="less than"/>
        <end position="233"/>
    </location>
</feature>
<feature type="region of interest" description="Disordered" evidence="5">
    <location>
        <begin position="48"/>
        <end position="88"/>
    </location>
</feature>
<feature type="coiled-coil region" evidence="3">
    <location>
        <begin position="6"/>
        <end position="222"/>
    </location>
</feature>
<feature type="compositionally biased region" description="Basic and acidic residues" evidence="5">
    <location>
        <begin position="51"/>
        <end position="79"/>
    </location>
</feature>
<feature type="non-terminal residue" evidence="9">
    <location>
        <position position="1"/>
    </location>
</feature>
<protein>
    <recommendedName>
        <fullName evidence="7 9">Tropomyosin</fullName>
    </recommendedName>
    <alternativeName>
        <fullName evidence="7">Allergen Cra g 1.03</fullName>
    </alternativeName>
    <allergenName evidence="8">Cra g 1</allergenName>
</protein>
<reference evidence="9" key="1">
    <citation type="journal article" date="2001" name="Clin. Exp. Allergy">
        <title>cDNA cloning and molecular identification of the major oyster allergen from the Pacific oyster Crassostrea gigas.</title>
        <authorList>
            <person name="Leung P.S."/>
            <person name="Chu K.H."/>
        </authorList>
    </citation>
    <scope>NUCLEOTIDE SEQUENCE [MRNA]</scope>
    <scope>ALLERGEN</scope>
</reference>
<sequence>NSARGFDTVNEKYQECQTKMEEAEKTASEAEQEIQSLNRRIQLLEEDMERSEERLQTATEKLEEASKAADESERNRKVLENLNNASEERTDVLEKQLTEAKLIAEEADKKYDEAARKLAITEVDLERAEARLEAAEAKVLELEEELKVVGNNMKSLEISEQEASQREDSYEETIRDLTQRLKDAENRATEAERTVSKLQKEVDRLEDELLAEKERYKAISDELDQTFAELAGY</sequence>
<proteinExistence type="evidence at protein level"/>
<name>TPM03_MAGGI</name>
<evidence type="ECO:0000250" key="1">
    <source>
        <dbReference type="UniProtKB" id="A2V735"/>
    </source>
</evidence>
<evidence type="ECO:0000250" key="2">
    <source>
        <dbReference type="UniProtKB" id="Q22866"/>
    </source>
</evidence>
<evidence type="ECO:0000255" key="3"/>
<evidence type="ECO:0000255" key="4">
    <source>
        <dbReference type="RuleBase" id="RU004515"/>
    </source>
</evidence>
<evidence type="ECO:0000256" key="5">
    <source>
        <dbReference type="SAM" id="MobiDB-lite"/>
    </source>
</evidence>
<evidence type="ECO:0000269" key="6">
    <source>
    </source>
</evidence>
<evidence type="ECO:0000303" key="7">
    <source>
    </source>
</evidence>
<evidence type="ECO:0000305" key="8"/>
<evidence type="ECO:0000312" key="9">
    <source>
        <dbReference type="EMBL" id="AAK96889.1"/>
    </source>
</evidence>
<dbReference type="EMBL" id="AF239173">
    <property type="protein sequence ID" value="AAK96889.1"/>
    <property type="molecule type" value="mRNA"/>
</dbReference>
<dbReference type="SMR" id="Q95WY0"/>
<dbReference type="Allergome" id="247">
    <property type="allergen name" value="Cra g 1"/>
</dbReference>
<dbReference type="InParanoid" id="Q95WY0"/>
<dbReference type="Proteomes" id="UP000005408">
    <property type="component" value="Unplaced"/>
</dbReference>
<dbReference type="GO" id="GO:0042803">
    <property type="term" value="F:protein homodimerization activity"/>
    <property type="evidence" value="ECO:0000250"/>
    <property type="project" value="UniProtKB"/>
</dbReference>
<dbReference type="GO" id="GO:0006937">
    <property type="term" value="P:regulation of muscle contraction"/>
    <property type="evidence" value="ECO:0000250"/>
    <property type="project" value="UniProtKB"/>
</dbReference>
<dbReference type="FunFam" id="1.20.5.170:FF:000001">
    <property type="entry name" value="Tropomyosin alpha-1 chain isoform 1"/>
    <property type="match status" value="1"/>
</dbReference>
<dbReference type="Gene3D" id="1.20.5.170">
    <property type="match status" value="2"/>
</dbReference>
<dbReference type="InterPro" id="IPR000533">
    <property type="entry name" value="Tropomyosin"/>
</dbReference>
<dbReference type="PANTHER" id="PTHR19269">
    <property type="entry name" value="TROPOMYOSIN"/>
    <property type="match status" value="1"/>
</dbReference>
<dbReference type="Pfam" id="PF00261">
    <property type="entry name" value="Tropomyosin"/>
    <property type="match status" value="1"/>
</dbReference>
<dbReference type="PRINTS" id="PR00194">
    <property type="entry name" value="TROPOMYOSIN"/>
</dbReference>
<dbReference type="SUPFAM" id="SSF57997">
    <property type="entry name" value="Tropomyosin"/>
    <property type="match status" value="1"/>
</dbReference>
<dbReference type="PROSITE" id="PS00326">
    <property type="entry name" value="TROPOMYOSIN"/>
    <property type="match status" value="1"/>
</dbReference>